<proteinExistence type="evidence at protein level"/>
<name>DUT_RICPR</name>
<sequence length="148" mass="16068">MTIIEVKIKKLENFLGNLPEYATEHSAGMDLVAANEQSITIKVGSIQLIPTGIAIALPESFEAQIRPRSGLAVKHGITVANSPGTIDADYRGEIKVLLINLGNKDFIIEKGMRIAQMIIAKYERVLWAETSILTETMRGRGGFGSTGL</sequence>
<dbReference type="EC" id="3.6.1.23" evidence="1"/>
<dbReference type="EMBL" id="AJ235271">
    <property type="protein sequence ID" value="CAA14856.1"/>
    <property type="molecule type" value="Genomic_DNA"/>
</dbReference>
<dbReference type="PIR" id="F71697">
    <property type="entry name" value="F71697"/>
</dbReference>
<dbReference type="RefSeq" id="NP_220780.1">
    <property type="nucleotide sequence ID" value="NC_000963.1"/>
</dbReference>
<dbReference type="RefSeq" id="WP_004597580.1">
    <property type="nucleotide sequence ID" value="NC_000963.1"/>
</dbReference>
<dbReference type="PDB" id="7N56">
    <property type="method" value="X-ray"/>
    <property type="resolution" value="2.15 A"/>
    <property type="chains" value="A/B/C/D/E/F/G/H/I/J/K/L=1-148"/>
</dbReference>
<dbReference type="PDB" id="7N6S">
    <property type="method" value="X-ray"/>
    <property type="resolution" value="1.75 A"/>
    <property type="chains" value="A/B/C/D/E/F=1-148"/>
</dbReference>
<dbReference type="PDBsum" id="7N56"/>
<dbReference type="PDBsum" id="7N6S"/>
<dbReference type="SMR" id="Q9ZDD2"/>
<dbReference type="STRING" id="272947.gene:17555479"/>
<dbReference type="EnsemblBacteria" id="CAA14856">
    <property type="protein sequence ID" value="CAA14856"/>
    <property type="gene ID" value="CAA14856"/>
</dbReference>
<dbReference type="GeneID" id="57569524"/>
<dbReference type="KEGG" id="rpr:RP399"/>
<dbReference type="PATRIC" id="fig|272947.5.peg.412"/>
<dbReference type="eggNOG" id="COG0756">
    <property type="taxonomic scope" value="Bacteria"/>
</dbReference>
<dbReference type="HOGENOM" id="CLU_068508_1_2_5"/>
<dbReference type="OrthoDB" id="9809956at2"/>
<dbReference type="UniPathway" id="UPA00610">
    <property type="reaction ID" value="UER00666"/>
</dbReference>
<dbReference type="Proteomes" id="UP000002480">
    <property type="component" value="Chromosome"/>
</dbReference>
<dbReference type="GO" id="GO:0004170">
    <property type="term" value="F:dUTP diphosphatase activity"/>
    <property type="evidence" value="ECO:0007669"/>
    <property type="project" value="UniProtKB-UniRule"/>
</dbReference>
<dbReference type="GO" id="GO:0000287">
    <property type="term" value="F:magnesium ion binding"/>
    <property type="evidence" value="ECO:0007669"/>
    <property type="project" value="UniProtKB-UniRule"/>
</dbReference>
<dbReference type="GO" id="GO:0006226">
    <property type="term" value="P:dUMP biosynthetic process"/>
    <property type="evidence" value="ECO:0007669"/>
    <property type="project" value="UniProtKB-UniRule"/>
</dbReference>
<dbReference type="GO" id="GO:0046081">
    <property type="term" value="P:dUTP catabolic process"/>
    <property type="evidence" value="ECO:0007669"/>
    <property type="project" value="InterPro"/>
</dbReference>
<dbReference type="CDD" id="cd07557">
    <property type="entry name" value="trimeric_dUTPase"/>
    <property type="match status" value="1"/>
</dbReference>
<dbReference type="FunFam" id="2.70.40.10:FF:000002">
    <property type="entry name" value="dUTP diphosphatase"/>
    <property type="match status" value="1"/>
</dbReference>
<dbReference type="Gene3D" id="2.70.40.10">
    <property type="match status" value="1"/>
</dbReference>
<dbReference type="HAMAP" id="MF_00116">
    <property type="entry name" value="dUTPase_bact"/>
    <property type="match status" value="1"/>
</dbReference>
<dbReference type="InterPro" id="IPR008181">
    <property type="entry name" value="dUTPase"/>
</dbReference>
<dbReference type="InterPro" id="IPR029054">
    <property type="entry name" value="dUTPase-like"/>
</dbReference>
<dbReference type="InterPro" id="IPR036157">
    <property type="entry name" value="dUTPase-like_sf"/>
</dbReference>
<dbReference type="InterPro" id="IPR033704">
    <property type="entry name" value="dUTPase_trimeric"/>
</dbReference>
<dbReference type="NCBIfam" id="TIGR00576">
    <property type="entry name" value="dut"/>
    <property type="match status" value="1"/>
</dbReference>
<dbReference type="NCBIfam" id="NF001862">
    <property type="entry name" value="PRK00601.1"/>
    <property type="match status" value="1"/>
</dbReference>
<dbReference type="PANTHER" id="PTHR11241">
    <property type="entry name" value="DEOXYURIDINE 5'-TRIPHOSPHATE NUCLEOTIDOHYDROLASE"/>
    <property type="match status" value="1"/>
</dbReference>
<dbReference type="PANTHER" id="PTHR11241:SF0">
    <property type="entry name" value="DEOXYURIDINE 5'-TRIPHOSPHATE NUCLEOTIDOHYDROLASE"/>
    <property type="match status" value="1"/>
</dbReference>
<dbReference type="Pfam" id="PF00692">
    <property type="entry name" value="dUTPase"/>
    <property type="match status" value="1"/>
</dbReference>
<dbReference type="SUPFAM" id="SSF51283">
    <property type="entry name" value="dUTPase-like"/>
    <property type="match status" value="1"/>
</dbReference>
<reference key="1">
    <citation type="journal article" date="1998" name="Nature">
        <title>The genome sequence of Rickettsia prowazekii and the origin of mitochondria.</title>
        <authorList>
            <person name="Andersson S.G.E."/>
            <person name="Zomorodipour A."/>
            <person name="Andersson J.O."/>
            <person name="Sicheritz-Ponten T."/>
            <person name="Alsmark U.C.M."/>
            <person name="Podowski R.M."/>
            <person name="Naeslund A.K."/>
            <person name="Eriksson A.-S."/>
            <person name="Winkler H.H."/>
            <person name="Kurland C.G."/>
        </authorList>
    </citation>
    <scope>NUCLEOTIDE SEQUENCE [LARGE SCALE GENOMIC DNA]</scope>
    <source>
        <strain>Madrid E</strain>
    </source>
</reference>
<comment type="function">
    <text evidence="1">This enzyme is involved in nucleotide metabolism: it produces dUMP, the immediate precursor of thymidine nucleotides and it decreases the intracellular concentration of dUTP so that uracil cannot be incorporated into DNA.</text>
</comment>
<comment type="catalytic activity">
    <reaction evidence="1">
        <text>dUTP + H2O = dUMP + diphosphate + H(+)</text>
        <dbReference type="Rhea" id="RHEA:10248"/>
        <dbReference type="ChEBI" id="CHEBI:15377"/>
        <dbReference type="ChEBI" id="CHEBI:15378"/>
        <dbReference type="ChEBI" id="CHEBI:33019"/>
        <dbReference type="ChEBI" id="CHEBI:61555"/>
        <dbReference type="ChEBI" id="CHEBI:246422"/>
        <dbReference type="EC" id="3.6.1.23"/>
    </reaction>
</comment>
<comment type="cofactor">
    <cofactor evidence="1">
        <name>Mg(2+)</name>
        <dbReference type="ChEBI" id="CHEBI:18420"/>
    </cofactor>
</comment>
<comment type="pathway">
    <text evidence="1">Pyrimidine metabolism; dUMP biosynthesis; dUMP from dCTP (dUTP route): step 2/2.</text>
</comment>
<comment type="similarity">
    <text evidence="1">Belongs to the dUTPase family.</text>
</comment>
<feature type="chain" id="PRO_0000182903" description="Deoxyuridine 5'-triphosphate nucleotidohydrolase">
    <location>
        <begin position="1"/>
        <end position="148"/>
    </location>
</feature>
<feature type="binding site" evidence="1">
    <location>
        <begin position="68"/>
        <end position="70"/>
    </location>
    <ligand>
        <name>substrate</name>
    </ligand>
</feature>
<feature type="binding site" evidence="1">
    <location>
        <position position="81"/>
    </location>
    <ligand>
        <name>substrate</name>
    </ligand>
</feature>
<feature type="binding site" evidence="1">
    <location>
        <begin position="85"/>
        <end position="87"/>
    </location>
    <ligand>
        <name>substrate</name>
    </ligand>
</feature>
<feature type="binding site" evidence="1">
    <location>
        <position position="95"/>
    </location>
    <ligand>
        <name>substrate</name>
    </ligand>
</feature>
<feature type="strand" evidence="2">
    <location>
        <begin position="3"/>
        <end position="10"/>
    </location>
</feature>
<feature type="strand" evidence="2">
    <location>
        <begin position="27"/>
        <end position="32"/>
    </location>
</feature>
<feature type="strand" evidence="2">
    <location>
        <begin position="39"/>
        <end position="41"/>
    </location>
</feature>
<feature type="strand" evidence="2">
    <location>
        <begin position="46"/>
        <end position="50"/>
    </location>
</feature>
<feature type="strand" evidence="2">
    <location>
        <begin position="52"/>
        <end position="56"/>
    </location>
</feature>
<feature type="strand" evidence="2">
    <location>
        <begin position="61"/>
        <end position="66"/>
    </location>
</feature>
<feature type="helix" evidence="2">
    <location>
        <begin position="69"/>
        <end position="75"/>
    </location>
</feature>
<feature type="strand" evidence="2">
    <location>
        <begin position="77"/>
        <end position="79"/>
    </location>
</feature>
<feature type="strand" evidence="2">
    <location>
        <begin position="82"/>
        <end position="86"/>
    </location>
</feature>
<feature type="strand" evidence="2">
    <location>
        <begin position="95"/>
        <end position="100"/>
    </location>
</feature>
<feature type="strand" evidence="2">
    <location>
        <begin position="102"/>
        <end position="104"/>
    </location>
</feature>
<feature type="strand" evidence="2">
    <location>
        <begin position="106"/>
        <end position="108"/>
    </location>
</feature>
<feature type="strand" evidence="2">
    <location>
        <begin position="113"/>
        <end position="121"/>
    </location>
</feature>
<feature type="strand" evidence="2">
    <location>
        <begin position="123"/>
        <end position="129"/>
    </location>
</feature>
<feature type="turn" evidence="2">
    <location>
        <begin position="138"/>
        <end position="141"/>
    </location>
</feature>
<evidence type="ECO:0000255" key="1">
    <source>
        <dbReference type="HAMAP-Rule" id="MF_00116"/>
    </source>
</evidence>
<evidence type="ECO:0007829" key="2">
    <source>
        <dbReference type="PDB" id="7N6S"/>
    </source>
</evidence>
<keyword id="KW-0002">3D-structure</keyword>
<keyword id="KW-0378">Hydrolase</keyword>
<keyword id="KW-0460">Magnesium</keyword>
<keyword id="KW-0479">Metal-binding</keyword>
<keyword id="KW-0546">Nucleotide metabolism</keyword>
<keyword id="KW-1185">Reference proteome</keyword>
<accession>Q9ZDD2</accession>
<protein>
    <recommendedName>
        <fullName evidence="1">Deoxyuridine 5'-triphosphate nucleotidohydrolase</fullName>
        <shortName evidence="1">dUTPase</shortName>
        <ecNumber evidence="1">3.6.1.23</ecNumber>
    </recommendedName>
    <alternativeName>
        <fullName evidence="1">dUTP pyrophosphatase</fullName>
    </alternativeName>
</protein>
<organism>
    <name type="scientific">Rickettsia prowazekii (strain Madrid E)</name>
    <dbReference type="NCBI Taxonomy" id="272947"/>
    <lineage>
        <taxon>Bacteria</taxon>
        <taxon>Pseudomonadati</taxon>
        <taxon>Pseudomonadota</taxon>
        <taxon>Alphaproteobacteria</taxon>
        <taxon>Rickettsiales</taxon>
        <taxon>Rickettsiaceae</taxon>
        <taxon>Rickettsieae</taxon>
        <taxon>Rickettsia</taxon>
        <taxon>typhus group</taxon>
    </lineage>
</organism>
<gene>
    <name evidence="1" type="primary">dut</name>
    <name type="ordered locus">RP399</name>
</gene>